<organism>
    <name type="scientific">Coccidioides immitis (strain RS)</name>
    <name type="common">Valley fever fungus</name>
    <dbReference type="NCBI Taxonomy" id="246410"/>
    <lineage>
        <taxon>Eukaryota</taxon>
        <taxon>Fungi</taxon>
        <taxon>Dikarya</taxon>
        <taxon>Ascomycota</taxon>
        <taxon>Pezizomycotina</taxon>
        <taxon>Eurotiomycetes</taxon>
        <taxon>Eurotiomycetidae</taxon>
        <taxon>Onygenales</taxon>
        <taxon>Onygenaceae</taxon>
        <taxon>Coccidioides</taxon>
    </lineage>
</organism>
<reference key="1">
    <citation type="journal article" date="2009" name="Genome Res.">
        <title>Comparative genomic analyses of the human fungal pathogens Coccidioides and their relatives.</title>
        <authorList>
            <person name="Sharpton T.J."/>
            <person name="Stajich J.E."/>
            <person name="Rounsley S.D."/>
            <person name="Gardner M.J."/>
            <person name="Wortman J.R."/>
            <person name="Jordar V.S."/>
            <person name="Maiti R."/>
            <person name="Kodira C.D."/>
            <person name="Neafsey D.E."/>
            <person name="Zeng Q."/>
            <person name="Hung C.-Y."/>
            <person name="McMahan C."/>
            <person name="Muszewska A."/>
            <person name="Grynberg M."/>
            <person name="Mandel M.A."/>
            <person name="Kellner E.M."/>
            <person name="Barker B.M."/>
            <person name="Galgiani J.N."/>
            <person name="Orbach M.J."/>
            <person name="Kirkland T.N."/>
            <person name="Cole G.T."/>
            <person name="Henn M.R."/>
            <person name="Birren B.W."/>
            <person name="Taylor J.W."/>
        </authorList>
    </citation>
    <scope>NUCLEOTIDE SEQUENCE [LARGE SCALE GENOMIC DNA]</scope>
    <source>
        <strain>RS</strain>
    </source>
</reference>
<reference key="2">
    <citation type="journal article" date="2010" name="Genome Res.">
        <title>Population genomic sequencing of Coccidioides fungi reveals recent hybridization and transposon control.</title>
        <authorList>
            <person name="Neafsey D.E."/>
            <person name="Barker B.M."/>
            <person name="Sharpton T.J."/>
            <person name="Stajich J.E."/>
            <person name="Park D.J."/>
            <person name="Whiston E."/>
            <person name="Hung C.-Y."/>
            <person name="McMahan C."/>
            <person name="White J."/>
            <person name="Sykes S."/>
            <person name="Heiman D."/>
            <person name="Young S."/>
            <person name="Zeng Q."/>
            <person name="Abouelleil A."/>
            <person name="Aftuck L."/>
            <person name="Bessette D."/>
            <person name="Brown A."/>
            <person name="FitzGerald M."/>
            <person name="Lui A."/>
            <person name="Macdonald J.P."/>
            <person name="Priest M."/>
            <person name="Orbach M.J."/>
            <person name="Galgiani J.N."/>
            <person name="Kirkland T.N."/>
            <person name="Cole G.T."/>
            <person name="Birren B.W."/>
            <person name="Henn M.R."/>
            <person name="Taylor J.W."/>
            <person name="Rounsley S.D."/>
        </authorList>
    </citation>
    <scope>GENOME REANNOTATION</scope>
    <source>
        <strain>RS</strain>
    </source>
</reference>
<sequence length="207" mass="23279">MSLIETHHLSYLPESHPVHVALYRDLQNASFLREQLLAGNTEFEYAFIDASMIFSRNHIFAAIFRAVRDYINNRLKSKNVHSEIVFSLGGSNNIADAFRRFGISESTRDLLVVKVSTAPEITHESVSKHLEHNIKALPCPFTEESLASMTDRARLRKVYKFGSVGADTFKRLDEVEQGKNGSETTKEAARKHIDMLLMGAIAIRGAT</sequence>
<evidence type="ECO:0000250" key="1"/>
<evidence type="ECO:0000305" key="2"/>
<feature type="chain" id="PRO_0000279210" description="EKC/KEOPS complex subunit CGI121">
    <location>
        <begin position="1"/>
        <end position="207"/>
    </location>
</feature>
<accession>Q1DYR7</accession>
<accession>J3KE60</accession>
<proteinExistence type="inferred from homology"/>
<comment type="function">
    <text evidence="1">Component of the EKC/KEOPS complex that is required for the formation of a threonylcarbamoyl group on adenosine at position 37 (t(6)A37) in tRNAs that read codons beginning with adenine. The complex is probably involved in the transfer of the threonylcarbamoyl moiety of threonylcarbamoyl-AMP (TC-AMP) to the N6 group of A37. CGI121 acts as an allosteric effector that regulates the t(6)A activity of the complex. The EKC/KEOPS complex also promotes both telomere uncapping and telomere elongation. The complex is required for efficient recruitment of transcriptional coactivators. CGI121 is not required for tRNA modification (By similarity).</text>
</comment>
<comment type="subunit">
    <text evidence="1">Component of the EKC/KEOPS complex composed of at least BUD32, CGI121, GON7, KAE1 and PCC1; the whole complex dimerizes.</text>
</comment>
<comment type="subcellular location">
    <subcellularLocation>
        <location evidence="1">Nucleus</location>
    </subcellularLocation>
    <subcellularLocation>
        <location evidence="1">Chromosome</location>
        <location evidence="1">Telomere</location>
    </subcellularLocation>
</comment>
<comment type="similarity">
    <text evidence="2">Belongs to the CGI121/TPRKB family.</text>
</comment>
<keyword id="KW-0010">Activator</keyword>
<keyword id="KW-0158">Chromosome</keyword>
<keyword id="KW-0539">Nucleus</keyword>
<keyword id="KW-1185">Reference proteome</keyword>
<keyword id="KW-0779">Telomere</keyword>
<keyword id="KW-0804">Transcription</keyword>
<keyword id="KW-0805">Transcription regulation</keyword>
<keyword id="KW-0819">tRNA processing</keyword>
<protein>
    <recommendedName>
        <fullName>EKC/KEOPS complex subunit CGI121</fullName>
    </recommendedName>
</protein>
<gene>
    <name type="primary">CGI121</name>
    <name type="ORF">CIMG_04546</name>
</gene>
<name>CG121_COCIM</name>
<dbReference type="EMBL" id="GG704914">
    <property type="protein sequence ID" value="EAS33522.3"/>
    <property type="molecule type" value="Genomic_DNA"/>
</dbReference>
<dbReference type="RefSeq" id="XP_001245105.1">
    <property type="nucleotide sequence ID" value="XM_001245104.2"/>
</dbReference>
<dbReference type="SMR" id="Q1DYR7"/>
<dbReference type="FunCoup" id="Q1DYR7">
    <property type="interactions" value="487"/>
</dbReference>
<dbReference type="STRING" id="246410.Q1DYR7"/>
<dbReference type="GeneID" id="4564980"/>
<dbReference type="KEGG" id="cim:CIMG_04546"/>
<dbReference type="VEuPathDB" id="FungiDB:CIMG_04546"/>
<dbReference type="InParanoid" id="Q1DYR7"/>
<dbReference type="OMA" id="IVCRMST"/>
<dbReference type="OrthoDB" id="329139at2759"/>
<dbReference type="Proteomes" id="UP000001261">
    <property type="component" value="Unassembled WGS sequence"/>
</dbReference>
<dbReference type="GO" id="GO:0000781">
    <property type="term" value="C:chromosome, telomeric region"/>
    <property type="evidence" value="ECO:0007669"/>
    <property type="project" value="UniProtKB-SubCell"/>
</dbReference>
<dbReference type="GO" id="GO:0005829">
    <property type="term" value="C:cytosol"/>
    <property type="evidence" value="ECO:0007669"/>
    <property type="project" value="TreeGrafter"/>
</dbReference>
<dbReference type="GO" id="GO:0000408">
    <property type="term" value="C:EKC/KEOPS complex"/>
    <property type="evidence" value="ECO:0007669"/>
    <property type="project" value="TreeGrafter"/>
</dbReference>
<dbReference type="GO" id="GO:0005634">
    <property type="term" value="C:nucleus"/>
    <property type="evidence" value="ECO:0007669"/>
    <property type="project" value="UniProtKB-SubCell"/>
</dbReference>
<dbReference type="GO" id="GO:0002949">
    <property type="term" value="P:tRNA threonylcarbamoyladenosine modification"/>
    <property type="evidence" value="ECO:0007669"/>
    <property type="project" value="TreeGrafter"/>
</dbReference>
<dbReference type="Gene3D" id="3.30.2380.10">
    <property type="entry name" value="CGI121/TPRKB"/>
    <property type="match status" value="1"/>
</dbReference>
<dbReference type="InterPro" id="IPR013926">
    <property type="entry name" value="CGI121/TPRKB"/>
</dbReference>
<dbReference type="InterPro" id="IPR036504">
    <property type="entry name" value="CGI121/TPRKB_sf"/>
</dbReference>
<dbReference type="NCBIfam" id="NF011465">
    <property type="entry name" value="PRK14886.1-1"/>
    <property type="match status" value="1"/>
</dbReference>
<dbReference type="PANTHER" id="PTHR15840">
    <property type="entry name" value="CGI-121 FAMILY MEMBER"/>
    <property type="match status" value="1"/>
</dbReference>
<dbReference type="PANTHER" id="PTHR15840:SF10">
    <property type="entry name" value="EKC_KEOPS COMPLEX SUBUNIT TPRKB"/>
    <property type="match status" value="1"/>
</dbReference>
<dbReference type="Pfam" id="PF08617">
    <property type="entry name" value="CGI-121"/>
    <property type="match status" value="1"/>
</dbReference>
<dbReference type="SUPFAM" id="SSF143870">
    <property type="entry name" value="PF0523-like"/>
    <property type="match status" value="1"/>
</dbReference>